<organism>
    <name type="scientific">Bos taurus</name>
    <name type="common">Bovine</name>
    <dbReference type="NCBI Taxonomy" id="9913"/>
    <lineage>
        <taxon>Eukaryota</taxon>
        <taxon>Metazoa</taxon>
        <taxon>Chordata</taxon>
        <taxon>Craniata</taxon>
        <taxon>Vertebrata</taxon>
        <taxon>Euteleostomi</taxon>
        <taxon>Mammalia</taxon>
        <taxon>Eutheria</taxon>
        <taxon>Laurasiatheria</taxon>
        <taxon>Artiodactyla</taxon>
        <taxon>Ruminantia</taxon>
        <taxon>Pecora</taxon>
        <taxon>Bovidae</taxon>
        <taxon>Bovinae</taxon>
        <taxon>Bos</taxon>
    </lineage>
</organism>
<reference key="1">
    <citation type="submission" date="1998-03" db="EMBL/GenBank/DDBJ databases">
        <authorList>
            <person name="Terashima H."/>
        </authorList>
    </citation>
    <scope>NUCLEOTIDE SEQUENCE [MRNA]</scope>
    <source>
        <tissue>Small intestine</tissue>
    </source>
</reference>
<protein>
    <recommendedName>
        <fullName evidence="5">Thioredoxin reductase 1, cytoplasmic</fullName>
        <shortName>TR</shortName>
        <ecNumber evidence="3">1.8.1.9</ecNumber>
    </recommendedName>
    <alternativeName>
        <fullName evidence="3">Peroxidase TXNRD1</fullName>
        <ecNumber evidence="3">1.11.1.2</ecNumber>
    </alternativeName>
    <alternativeName>
        <fullName>Thioredoxin reductase TR1</fullName>
    </alternativeName>
</protein>
<accession>O62768</accession>
<feature type="chain" id="PRO_0000067981" description="Thioredoxin reductase 1, cytoplasmic">
    <location>
        <begin position="1"/>
        <end position="499"/>
    </location>
</feature>
<feature type="active site" description="Proton acceptor" evidence="1">
    <location>
        <position position="472"/>
    </location>
</feature>
<feature type="binding site" evidence="3">
    <location>
        <begin position="22"/>
        <end position="23"/>
    </location>
    <ligand>
        <name>FAD</name>
        <dbReference type="ChEBI" id="CHEBI:57692"/>
    </ligand>
</feature>
<feature type="binding site" evidence="3">
    <location>
        <begin position="42"/>
        <end position="43"/>
    </location>
    <ligand>
        <name>FAD</name>
        <dbReference type="ChEBI" id="CHEBI:57692"/>
    </ligand>
</feature>
<feature type="binding site" evidence="3">
    <location>
        <begin position="58"/>
        <end position="59"/>
    </location>
    <ligand>
        <name>FAD</name>
        <dbReference type="ChEBI" id="CHEBI:57692"/>
    </ligand>
</feature>
<feature type="binding site" evidence="3">
    <location>
        <begin position="63"/>
        <end position="67"/>
    </location>
    <ligand>
        <name>FAD</name>
        <dbReference type="ChEBI" id="CHEBI:57692"/>
    </ligand>
</feature>
<feature type="binding site" evidence="3">
    <location>
        <begin position="131"/>
        <end position="132"/>
    </location>
    <ligand>
        <name>FAD</name>
        <dbReference type="ChEBI" id="CHEBI:57692"/>
    </ligand>
</feature>
<feature type="binding site" evidence="3">
    <location>
        <position position="161"/>
    </location>
    <ligand>
        <name>FAD</name>
        <dbReference type="ChEBI" id="CHEBI:57692"/>
    </ligand>
</feature>
<feature type="binding site" evidence="3">
    <location>
        <position position="166"/>
    </location>
    <ligand>
        <name>NADP(+)</name>
        <dbReference type="ChEBI" id="CHEBI:58349"/>
    </ligand>
</feature>
<feature type="binding site" evidence="3">
    <location>
        <begin position="198"/>
        <end position="204"/>
    </location>
    <ligand>
        <name>NADP(+)</name>
        <dbReference type="ChEBI" id="CHEBI:58349"/>
    </ligand>
</feature>
<feature type="binding site" evidence="3">
    <location>
        <position position="200"/>
    </location>
    <ligand>
        <name>FAD</name>
        <dbReference type="ChEBI" id="CHEBI:57692"/>
    </ligand>
</feature>
<feature type="binding site" evidence="3">
    <location>
        <begin position="221"/>
        <end position="222"/>
    </location>
    <ligand>
        <name>NADP(+)</name>
        <dbReference type="ChEBI" id="CHEBI:58349"/>
    </ligand>
</feature>
<feature type="binding site" evidence="3">
    <location>
        <begin position="226"/>
        <end position="228"/>
    </location>
    <ligand>
        <name>NADP(+)</name>
        <dbReference type="ChEBI" id="CHEBI:58349"/>
    </ligand>
</feature>
<feature type="binding site" evidence="2">
    <location>
        <position position="226"/>
    </location>
    <ligand>
        <name>NADP(+)</name>
        <dbReference type="ChEBI" id="CHEBI:58349"/>
    </ligand>
</feature>
<feature type="binding site" evidence="3">
    <location>
        <begin position="292"/>
        <end position="293"/>
    </location>
    <ligand>
        <name>NADP(+)</name>
        <dbReference type="ChEBI" id="CHEBI:58349"/>
    </ligand>
</feature>
<feature type="binding site" evidence="3">
    <location>
        <position position="315"/>
    </location>
    <ligand>
        <name>NADP(+)</name>
        <dbReference type="ChEBI" id="CHEBI:58349"/>
    </ligand>
</feature>
<feature type="binding site" evidence="3">
    <location>
        <position position="334"/>
    </location>
    <ligand>
        <name>FAD</name>
        <dbReference type="ChEBI" id="CHEBI:57692"/>
    </ligand>
</feature>
<feature type="binding site" evidence="3">
    <location>
        <begin position="341"/>
        <end position="343"/>
    </location>
    <ligand>
        <name>FAD</name>
        <dbReference type="ChEBI" id="CHEBI:57692"/>
    </ligand>
</feature>
<feature type="binding site" evidence="3">
    <location>
        <position position="341"/>
    </location>
    <ligand>
        <name>NADP(+)</name>
        <dbReference type="ChEBI" id="CHEBI:58349"/>
    </ligand>
</feature>
<feature type="binding site" evidence="3">
    <location>
        <position position="472"/>
    </location>
    <ligand>
        <name>FAD</name>
        <dbReference type="ChEBI" id="CHEBI:57692"/>
    </ligand>
</feature>
<feature type="non-standard amino acid" description="Selenocysteine">
    <location>
        <position position="498"/>
    </location>
</feature>
<feature type="modified residue" description="N6-succinyllysine" evidence="4">
    <location>
        <position position="68"/>
    </location>
</feature>
<feature type="modified residue" description="Phosphotyrosine" evidence="3">
    <location>
        <position position="131"/>
    </location>
</feature>
<feature type="disulfide bond" description="Redox-active" evidence="1">
    <location>
        <begin position="59"/>
        <end position="64"/>
    </location>
</feature>
<feature type="cross-link" description="Cysteinyl-selenocysteine (Cys-Sec)" evidence="1">
    <location>
        <begin position="497"/>
        <end position="498"/>
    </location>
</feature>
<proteinExistence type="evidence at transcript level"/>
<keyword id="KW-0963">Cytoplasm</keyword>
<keyword id="KW-1015">Disulfide bond</keyword>
<keyword id="KW-0274">FAD</keyword>
<keyword id="KW-0285">Flavoprotein</keyword>
<keyword id="KW-0521">NADP</keyword>
<keyword id="KW-0560">Oxidoreductase</keyword>
<keyword id="KW-0597">Phosphoprotein</keyword>
<keyword id="KW-0676">Redox-active center</keyword>
<keyword id="KW-1185">Reference proteome</keyword>
<keyword id="KW-0712">Selenocysteine</keyword>
<keyword id="KW-0832">Ubl conjugation</keyword>
<evidence type="ECO:0000250" key="1"/>
<evidence type="ECO:0000250" key="2">
    <source>
        <dbReference type="UniProtKB" id="O89049"/>
    </source>
</evidence>
<evidence type="ECO:0000250" key="3">
    <source>
        <dbReference type="UniProtKB" id="Q16881"/>
    </source>
</evidence>
<evidence type="ECO:0000250" key="4">
    <source>
        <dbReference type="UniProtKB" id="Q9JMH6"/>
    </source>
</evidence>
<evidence type="ECO:0000305" key="5"/>
<comment type="function">
    <text evidence="3">Reduces disulfideprotein thioredoxin (Trx) to its dithiol-containing form. Homodimeric flavoprotein involved in the regulation of cellular redox reactions, growth and differentiation. Contains a selenocysteine residue at the C-terminal active site that is essential for catalysis. Also has reductase activity on hydrogen peroxide (H2O2).</text>
</comment>
<comment type="catalytic activity">
    <reaction evidence="3">
        <text>[thioredoxin]-dithiol + NADP(+) = [thioredoxin]-disulfide + NADPH + H(+)</text>
        <dbReference type="Rhea" id="RHEA:20345"/>
        <dbReference type="Rhea" id="RHEA-COMP:10698"/>
        <dbReference type="Rhea" id="RHEA-COMP:10700"/>
        <dbReference type="ChEBI" id="CHEBI:15378"/>
        <dbReference type="ChEBI" id="CHEBI:29950"/>
        <dbReference type="ChEBI" id="CHEBI:50058"/>
        <dbReference type="ChEBI" id="CHEBI:57783"/>
        <dbReference type="ChEBI" id="CHEBI:58349"/>
        <dbReference type="EC" id="1.8.1.9"/>
    </reaction>
    <physiologicalReaction direction="right-to-left" evidence="3">
        <dbReference type="Rhea" id="RHEA:20347"/>
    </physiologicalReaction>
</comment>
<comment type="catalytic activity">
    <reaction evidence="3">
        <text>H2O2 + NADPH + H(+) = NADP(+) + 2 H2O</text>
        <dbReference type="Rhea" id="RHEA:15173"/>
        <dbReference type="ChEBI" id="CHEBI:15377"/>
        <dbReference type="ChEBI" id="CHEBI:15378"/>
        <dbReference type="ChEBI" id="CHEBI:16240"/>
        <dbReference type="ChEBI" id="CHEBI:57783"/>
        <dbReference type="ChEBI" id="CHEBI:58349"/>
        <dbReference type="EC" id="1.11.1.2"/>
    </reaction>
    <physiologicalReaction direction="left-to-right" evidence="3">
        <dbReference type="Rhea" id="RHEA:15174"/>
    </physiologicalReaction>
</comment>
<comment type="cofactor">
    <cofactor evidence="3">
        <name>FAD</name>
        <dbReference type="ChEBI" id="CHEBI:57692"/>
    </cofactor>
    <text evidence="3">Binds 1 FAD per subunit.</text>
</comment>
<comment type="subunit">
    <text evidence="3">Homodimer.</text>
</comment>
<comment type="subcellular location">
    <subcellularLocation>
        <location evidence="3">Cytoplasm</location>
    </subcellularLocation>
</comment>
<comment type="PTM">
    <text evidence="3">ISGylated.</text>
</comment>
<comment type="miscellaneous">
    <text evidence="2">The thioredoxin reductase active site is a redox-active disulfide bond. The selenocysteine residue is also essential for catalytic activity.</text>
</comment>
<comment type="similarity">
    <text evidence="5">Belongs to the class-I pyridine nucleotide-disulfide oxidoreductase family.</text>
</comment>
<name>TRXR1_BOVIN</name>
<sequence>MNGSKDLPEPYDYDLIIIGGGSGGLAAAKEAAKYDKKVMVLDFVTPTPLGTRWGLGGTCVNVGCIPKKLMHQAALLGQALRDSRNYGWNVEETVKHDWERMTEAVQNHIGSLNWGYRVALREKKVTYENAYGEFVGPHRIKATNNKGKEKIYSAERFLIATGERPRYLGIPGDKEYCISSDDLFSLPYCPGKTLVVGASYVALECAGFLAGIGLDVTVMVRSILLRGFDQDMANKIGEHMQEHGIKFIRQFVPIKVEQIEAGTPGRLRVIAKSTDSDQTIEGEYNTVLLAIGRDACTRKIGLENVGVKINEKTGKIPVTEEEQTNVPYIYAIGDILEGKLELTPVAIQAGRLLAQRLYGGSTVKCDYENVPTTVFTPLEYGSCGLSEEKAVEKFGEENVEVYHSYFWPLEWTIPSRDNNKCYAKVVCNIKDNERVVGFHVLGPNAGEVTQGFAAALKCGLTKDQLDSTIGIHPVCAEVFTTLSVTKRSGGNILQTGCUG</sequence>
<dbReference type="EC" id="1.8.1.9" evidence="3"/>
<dbReference type="EC" id="1.11.1.2" evidence="3"/>
<dbReference type="EMBL" id="AF053984">
    <property type="protein sequence ID" value="AAC13914.1"/>
    <property type="molecule type" value="mRNA"/>
</dbReference>
<dbReference type="RefSeq" id="NP_777050.1">
    <property type="nucleotide sequence ID" value="NM_174625.5"/>
</dbReference>
<dbReference type="FunCoup" id="O62768">
    <property type="interactions" value="1997"/>
</dbReference>
<dbReference type="STRING" id="9913.ENSBTAP00000018473"/>
<dbReference type="PaxDb" id="9913-ENSBTAP00000053996"/>
<dbReference type="PeptideAtlas" id="O62768"/>
<dbReference type="Ensembl" id="ENSBTAT00000018473.7">
    <property type="protein sequence ID" value="ENSBTAP00000018473.7"/>
    <property type="gene ID" value="ENSBTAG00000013912.8"/>
</dbReference>
<dbReference type="GeneID" id="282388"/>
<dbReference type="KEGG" id="bta:282388"/>
<dbReference type="CTD" id="7296"/>
<dbReference type="VEuPathDB" id="HostDB:ENSBTAG00000013912"/>
<dbReference type="VGNC" id="VGNC:36545">
    <property type="gene designation" value="TXNRD1"/>
</dbReference>
<dbReference type="eggNOG" id="KOG4716">
    <property type="taxonomic scope" value="Eukaryota"/>
</dbReference>
<dbReference type="GeneTree" id="ENSGT00940000160180"/>
<dbReference type="HOGENOM" id="CLU_016755_2_4_1"/>
<dbReference type="InParanoid" id="O62768"/>
<dbReference type="OMA" id="NYHKLAD"/>
<dbReference type="OrthoDB" id="5956163at2759"/>
<dbReference type="BRENDA" id="1.8.1.9">
    <property type="organism ID" value="908"/>
</dbReference>
<dbReference type="Reactome" id="R-BTA-3299685">
    <property type="pathway name" value="Detoxification of Reactive Oxygen Species"/>
</dbReference>
<dbReference type="Reactome" id="R-BTA-499943">
    <property type="pathway name" value="Interconversion of nucleotide di- and triphosphates"/>
</dbReference>
<dbReference type="Reactome" id="R-BTA-5263617">
    <property type="pathway name" value="Metabolism of ingested MeSeO2H into MeSeH"/>
</dbReference>
<dbReference type="Reactome" id="R-BTA-5628897">
    <property type="pathway name" value="TP53 Regulates Metabolic Genes"/>
</dbReference>
<dbReference type="SABIO-RK" id="O62768"/>
<dbReference type="Proteomes" id="UP000009136">
    <property type="component" value="Chromosome 5"/>
</dbReference>
<dbReference type="Bgee" id="ENSBTAG00000013912">
    <property type="expression patterns" value="Expressed in rumen papilla and 105 other cell types or tissues"/>
</dbReference>
<dbReference type="GO" id="GO:0005737">
    <property type="term" value="C:cytoplasm"/>
    <property type="evidence" value="ECO:0000318"/>
    <property type="project" value="GO_Central"/>
</dbReference>
<dbReference type="GO" id="GO:0005829">
    <property type="term" value="C:cytosol"/>
    <property type="evidence" value="ECO:0000318"/>
    <property type="project" value="GO_Central"/>
</dbReference>
<dbReference type="GO" id="GO:0001650">
    <property type="term" value="C:fibrillar center"/>
    <property type="evidence" value="ECO:0007669"/>
    <property type="project" value="Ensembl"/>
</dbReference>
<dbReference type="GO" id="GO:0005739">
    <property type="term" value="C:mitochondrion"/>
    <property type="evidence" value="ECO:0000318"/>
    <property type="project" value="GO_Central"/>
</dbReference>
<dbReference type="GO" id="GO:0005654">
    <property type="term" value="C:nucleoplasm"/>
    <property type="evidence" value="ECO:0007669"/>
    <property type="project" value="Ensembl"/>
</dbReference>
<dbReference type="GO" id="GO:0071949">
    <property type="term" value="F:FAD binding"/>
    <property type="evidence" value="ECO:0000250"/>
    <property type="project" value="UniProtKB"/>
</dbReference>
<dbReference type="GO" id="GO:0042802">
    <property type="term" value="F:identical protein binding"/>
    <property type="evidence" value="ECO:0000250"/>
    <property type="project" value="UniProtKB"/>
</dbReference>
<dbReference type="GO" id="GO:0050137">
    <property type="term" value="F:NADPH peroxidase activity"/>
    <property type="evidence" value="ECO:0000250"/>
    <property type="project" value="UniProtKB"/>
</dbReference>
<dbReference type="GO" id="GO:0004791">
    <property type="term" value="F:thioredoxin-disulfide reductase (NADPH) activity"/>
    <property type="evidence" value="ECO:0000250"/>
    <property type="project" value="UniProtKB"/>
</dbReference>
<dbReference type="GO" id="GO:0008283">
    <property type="term" value="P:cell population proliferation"/>
    <property type="evidence" value="ECO:0007669"/>
    <property type="project" value="Ensembl"/>
</dbReference>
<dbReference type="GO" id="GO:0045454">
    <property type="term" value="P:cell redox homeostasis"/>
    <property type="evidence" value="ECO:0000318"/>
    <property type="project" value="GO_Central"/>
</dbReference>
<dbReference type="GO" id="GO:0001707">
    <property type="term" value="P:mesoderm formation"/>
    <property type="evidence" value="ECO:0007669"/>
    <property type="project" value="Ensembl"/>
</dbReference>
<dbReference type="GO" id="GO:0006979">
    <property type="term" value="P:response to oxidative stress"/>
    <property type="evidence" value="ECO:0007669"/>
    <property type="project" value="UniProtKB-ARBA"/>
</dbReference>
<dbReference type="FunFam" id="3.50.50.60:FF:000190">
    <property type="entry name" value="Thioredoxin reductase"/>
    <property type="match status" value="1"/>
</dbReference>
<dbReference type="FunFam" id="3.30.390.30:FF:000004">
    <property type="entry name" value="Thioredoxin reductase 1, cytoplasmic"/>
    <property type="match status" value="1"/>
</dbReference>
<dbReference type="Gene3D" id="3.30.390.30">
    <property type="match status" value="1"/>
</dbReference>
<dbReference type="Gene3D" id="3.50.50.60">
    <property type="entry name" value="FAD/NAD(P)-binding domain"/>
    <property type="match status" value="2"/>
</dbReference>
<dbReference type="InterPro" id="IPR036188">
    <property type="entry name" value="FAD/NAD-bd_sf"/>
</dbReference>
<dbReference type="InterPro" id="IPR023753">
    <property type="entry name" value="FAD/NAD-binding_dom"/>
</dbReference>
<dbReference type="InterPro" id="IPR016156">
    <property type="entry name" value="FAD/NAD-linked_Rdtase_dimer_sf"/>
</dbReference>
<dbReference type="InterPro" id="IPR046952">
    <property type="entry name" value="GSHR/TRXR-like"/>
</dbReference>
<dbReference type="InterPro" id="IPR001100">
    <property type="entry name" value="Pyr_nuc-diS_OxRdtase"/>
</dbReference>
<dbReference type="InterPro" id="IPR004099">
    <property type="entry name" value="Pyr_nucl-diS_OxRdtase_dimer"/>
</dbReference>
<dbReference type="InterPro" id="IPR012999">
    <property type="entry name" value="Pyr_OxRdtase_I_AS"/>
</dbReference>
<dbReference type="InterPro" id="IPR006338">
    <property type="entry name" value="Thioredoxin/glutathione_Rdtase"/>
</dbReference>
<dbReference type="NCBIfam" id="TIGR01438">
    <property type="entry name" value="TGR"/>
    <property type="match status" value="1"/>
</dbReference>
<dbReference type="PANTHER" id="PTHR42737">
    <property type="entry name" value="GLUTATHIONE REDUCTASE"/>
    <property type="match status" value="1"/>
</dbReference>
<dbReference type="PANTHER" id="PTHR42737:SF8">
    <property type="entry name" value="THIOREDOXIN-DISULFIDE REDUCTASE"/>
    <property type="match status" value="1"/>
</dbReference>
<dbReference type="Pfam" id="PF07992">
    <property type="entry name" value="Pyr_redox_2"/>
    <property type="match status" value="1"/>
</dbReference>
<dbReference type="Pfam" id="PF02852">
    <property type="entry name" value="Pyr_redox_dim"/>
    <property type="match status" value="1"/>
</dbReference>
<dbReference type="PIRSF" id="PIRSF000350">
    <property type="entry name" value="Mercury_reductase_MerA"/>
    <property type="match status" value="1"/>
</dbReference>
<dbReference type="PRINTS" id="PR00368">
    <property type="entry name" value="FADPNR"/>
</dbReference>
<dbReference type="PRINTS" id="PR00411">
    <property type="entry name" value="PNDRDTASEI"/>
</dbReference>
<dbReference type="SUPFAM" id="SSF51905">
    <property type="entry name" value="FAD/NAD(P)-binding domain"/>
    <property type="match status" value="1"/>
</dbReference>
<dbReference type="SUPFAM" id="SSF55424">
    <property type="entry name" value="FAD/NAD-linked reductases, dimerisation (C-terminal) domain"/>
    <property type="match status" value="1"/>
</dbReference>
<dbReference type="PROSITE" id="PS00076">
    <property type="entry name" value="PYRIDINE_REDOX_1"/>
    <property type="match status" value="1"/>
</dbReference>
<gene>
    <name type="primary">TXNRD1</name>
</gene>